<feature type="signal peptide">
    <location>
        <begin position="1"/>
        <end position="28"/>
    </location>
</feature>
<feature type="chain" id="PRO_0000014814" description="Lymphocyte function-associated antigen 3">
    <location>
        <begin position="29"/>
        <end position="250"/>
    </location>
</feature>
<feature type="topological domain" description="Extracellular" evidence="2">
    <location>
        <begin position="29"/>
        <end position="215"/>
    </location>
</feature>
<feature type="transmembrane region" description="Helical" evidence="2">
    <location>
        <begin position="216"/>
        <end position="238"/>
    </location>
</feature>
<feature type="topological domain" description="Cytoplasmic" evidence="2">
    <location>
        <begin position="239"/>
        <end position="250"/>
    </location>
</feature>
<feature type="domain" description="Ig-like">
    <location>
        <begin position="30"/>
        <end position="121"/>
    </location>
</feature>
<feature type="glycosylation site" description="N-linked (GlcNAc...) asparagine">
    <location>
        <position position="40"/>
    </location>
</feature>
<feature type="glycosylation site" description="N-linked (GlcNAc...) asparagine">
    <location>
        <position position="94"/>
    </location>
</feature>
<feature type="glycosylation site" description="N-linked (GlcNAc...) asparagine" evidence="2">
    <location>
        <position position="109"/>
    </location>
</feature>
<feature type="glycosylation site" description="N-linked (GlcNAc...) asparagine" evidence="2">
    <location>
        <position position="135"/>
    </location>
</feature>
<feature type="glycosylation site" description="N-linked (GlcNAc...) asparagine" evidence="2">
    <location>
        <position position="169"/>
    </location>
</feature>
<feature type="glycosylation site" description="N-linked (GlcNAc...) asparagine" evidence="2">
    <location>
        <position position="195"/>
    </location>
</feature>
<feature type="disulfide bond" evidence="1">
    <location>
        <begin position="142"/>
        <end position="187"/>
    </location>
</feature>
<feature type="splice variant" id="VSP_002522" description="In isoform 2." evidence="9 10">
    <original>GI</original>
    <variation>VL</variation>
    <location>
        <begin position="236"/>
        <end position="237"/>
    </location>
</feature>
<feature type="splice variant" id="VSP_002523" description="In isoform 2." evidence="9 10">
    <location>
        <begin position="238"/>
        <end position="250"/>
    </location>
</feature>
<feature type="splice variant" id="VSP_038693" description="In isoform 3." evidence="8">
    <original>NSN</original>
    <variation>K</variation>
    <location>
        <begin position="248"/>
        <end position="250"/>
    </location>
</feature>
<feature type="sequence variant" id="VAR_049885" description="In dbSNP:rs17426456.">
    <original>S</original>
    <variation>G</variation>
    <location>
        <position position="15"/>
    </location>
</feature>
<feature type="mutagenesis site" description="No effect on CD2-binding." evidence="3">
    <original>F</original>
    <variation>S</variation>
    <location>
        <position position="29"/>
    </location>
</feature>
<feature type="mutagenesis site" description="No effect on CD2-binding." evidence="3">
    <original>V</original>
    <variation>K</variation>
    <location>
        <position position="37"/>
    </location>
</feature>
<feature type="mutagenesis site" description="No effect on CD2-binding." evidence="3">
    <original>V</original>
    <variation>Q</variation>
    <location>
        <position position="49"/>
    </location>
</feature>
<feature type="mutagenesis site" description="No effect on CD2-binding." evidence="3">
    <original>V</original>
    <variation>K</variation>
    <location>
        <position position="86"/>
    </location>
</feature>
<feature type="mutagenesis site" description="No effect on CD2-binding." evidence="3">
    <original>T</original>
    <variation>S</variation>
    <location>
        <position position="113"/>
    </location>
</feature>
<feature type="mutagenesis site" description="No effect on CD2-binding." evidence="3">
    <original>L</original>
    <variation>G</variation>
    <location>
        <position position="121"/>
    </location>
</feature>
<feature type="strand" evidence="11">
    <location>
        <begin position="30"/>
        <end position="36"/>
    </location>
</feature>
<feature type="strand" evidence="11">
    <location>
        <begin position="41"/>
        <end position="43"/>
    </location>
</feature>
<feature type="strand" evidence="11">
    <location>
        <begin position="54"/>
        <end position="58"/>
    </location>
</feature>
<feature type="strand" evidence="11">
    <location>
        <begin position="61"/>
        <end position="67"/>
    </location>
</feature>
<feature type="strand" evidence="11">
    <location>
        <begin position="70"/>
        <end position="73"/>
    </location>
</feature>
<feature type="helix" evidence="11">
    <location>
        <begin position="75"/>
        <end position="77"/>
    </location>
</feature>
<feature type="strand" evidence="11">
    <location>
        <begin position="80"/>
        <end position="83"/>
    </location>
</feature>
<feature type="turn" evidence="11">
    <location>
        <begin position="85"/>
        <end position="87"/>
    </location>
</feature>
<feature type="strand" evidence="11">
    <location>
        <begin position="90"/>
        <end position="92"/>
    </location>
</feature>
<feature type="helix" evidence="11">
    <location>
        <begin position="97"/>
        <end position="99"/>
    </location>
</feature>
<feature type="strand" evidence="11">
    <location>
        <begin position="101"/>
        <end position="106"/>
    </location>
</feature>
<feature type="strand" evidence="11">
    <location>
        <begin position="114"/>
        <end position="121"/>
    </location>
</feature>
<organism>
    <name type="scientific">Homo sapiens</name>
    <name type="common">Human</name>
    <dbReference type="NCBI Taxonomy" id="9606"/>
    <lineage>
        <taxon>Eukaryota</taxon>
        <taxon>Metazoa</taxon>
        <taxon>Chordata</taxon>
        <taxon>Craniata</taxon>
        <taxon>Vertebrata</taxon>
        <taxon>Euteleostomi</taxon>
        <taxon>Mammalia</taxon>
        <taxon>Eutheria</taxon>
        <taxon>Euarchontoglires</taxon>
        <taxon>Primates</taxon>
        <taxon>Haplorrhini</taxon>
        <taxon>Catarrhini</taxon>
        <taxon>Hominidae</taxon>
        <taxon>Homo</taxon>
    </lineage>
</organism>
<protein>
    <recommendedName>
        <fullName>Lymphocyte function-associated antigen 3</fullName>
        <shortName>Ag3</shortName>
    </recommendedName>
    <alternativeName>
        <fullName>Surface glycoprotein LFA-3</fullName>
    </alternativeName>
    <cdAntigenName>CD58</cdAntigenName>
</protein>
<reference key="1">
    <citation type="journal article" date="1987" name="J. Exp. Med.">
        <title>Primary structure of lymphocyte function-associated antigen 3 (LFA-3). The ligand of the T lymphocyte CD2 glycoprotein.</title>
        <authorList>
            <person name="Wallner B.P."/>
            <person name="Frey A.Z."/>
            <person name="Tizard R."/>
            <person name="Mattaliano R.J."/>
            <person name="Hession C."/>
            <person name="Sanders M.E."/>
            <person name="Dustin M.L."/>
            <person name="Springer T.A."/>
        </authorList>
    </citation>
    <scope>NUCLEOTIDE SEQUENCE [MRNA] (ISOFORM 1)</scope>
    <scope>PARTIAL PROTEIN SEQUENCE</scope>
    <scope>INTERACTION WITH CD2</scope>
    <source>
        <tissue>Erythrocyte</tissue>
    </source>
</reference>
<reference key="2">
    <citation type="journal article" date="1987" name="Nature">
        <title>An LFA-3 cDNA encodes a phospholipid-linked membrane protein homologous to its receptor CD2.</title>
        <authorList>
            <person name="Seed B."/>
        </authorList>
    </citation>
    <scope>NUCLEOTIDE SEQUENCE [MRNA] (ISOFORM 2)</scope>
</reference>
<reference key="3">
    <citation type="journal article" date="1998" name="J. Immunol.">
        <title>Gene structure, promoter characterization, and basis for alternative mRNA splicing of the human CD58 gene.</title>
        <authorList>
            <person name="Wallich R."/>
            <person name="Brenner C."/>
            <person name="Brand Y."/>
            <person name="Roux M."/>
            <person name="Reister M."/>
            <person name="Meuer S."/>
        </authorList>
    </citation>
    <scope>NUCLEOTIDE SEQUENCE [GENOMIC DNA] (ISOFORMS 1 AND 2)</scope>
</reference>
<reference key="4">
    <citation type="journal article" date="2004" name="Nat. Genet.">
        <title>Complete sequencing and characterization of 21,243 full-length human cDNAs.</title>
        <authorList>
            <person name="Ota T."/>
            <person name="Suzuki Y."/>
            <person name="Nishikawa T."/>
            <person name="Otsuki T."/>
            <person name="Sugiyama T."/>
            <person name="Irie R."/>
            <person name="Wakamatsu A."/>
            <person name="Hayashi K."/>
            <person name="Sato H."/>
            <person name="Nagai K."/>
            <person name="Kimura K."/>
            <person name="Makita H."/>
            <person name="Sekine M."/>
            <person name="Obayashi M."/>
            <person name="Nishi T."/>
            <person name="Shibahara T."/>
            <person name="Tanaka T."/>
            <person name="Ishii S."/>
            <person name="Yamamoto J."/>
            <person name="Saito K."/>
            <person name="Kawai Y."/>
            <person name="Isono Y."/>
            <person name="Nakamura Y."/>
            <person name="Nagahari K."/>
            <person name="Murakami K."/>
            <person name="Yasuda T."/>
            <person name="Iwayanagi T."/>
            <person name="Wagatsuma M."/>
            <person name="Shiratori A."/>
            <person name="Sudo H."/>
            <person name="Hosoiri T."/>
            <person name="Kaku Y."/>
            <person name="Kodaira H."/>
            <person name="Kondo H."/>
            <person name="Sugawara M."/>
            <person name="Takahashi M."/>
            <person name="Kanda K."/>
            <person name="Yokoi T."/>
            <person name="Furuya T."/>
            <person name="Kikkawa E."/>
            <person name="Omura Y."/>
            <person name="Abe K."/>
            <person name="Kamihara K."/>
            <person name="Katsuta N."/>
            <person name="Sato K."/>
            <person name="Tanikawa M."/>
            <person name="Yamazaki M."/>
            <person name="Ninomiya K."/>
            <person name="Ishibashi T."/>
            <person name="Yamashita H."/>
            <person name="Murakawa K."/>
            <person name="Fujimori K."/>
            <person name="Tanai H."/>
            <person name="Kimata M."/>
            <person name="Watanabe M."/>
            <person name="Hiraoka S."/>
            <person name="Chiba Y."/>
            <person name="Ishida S."/>
            <person name="Ono Y."/>
            <person name="Takiguchi S."/>
            <person name="Watanabe S."/>
            <person name="Yosida M."/>
            <person name="Hotuta T."/>
            <person name="Kusano J."/>
            <person name="Kanehori K."/>
            <person name="Takahashi-Fujii A."/>
            <person name="Hara H."/>
            <person name="Tanase T.-O."/>
            <person name="Nomura Y."/>
            <person name="Togiya S."/>
            <person name="Komai F."/>
            <person name="Hara R."/>
            <person name="Takeuchi K."/>
            <person name="Arita M."/>
            <person name="Imose N."/>
            <person name="Musashino K."/>
            <person name="Yuuki H."/>
            <person name="Oshima A."/>
            <person name="Sasaki N."/>
            <person name="Aotsuka S."/>
            <person name="Yoshikawa Y."/>
            <person name="Matsunawa H."/>
            <person name="Ichihara T."/>
            <person name="Shiohata N."/>
            <person name="Sano S."/>
            <person name="Moriya S."/>
            <person name="Momiyama H."/>
            <person name="Satoh N."/>
            <person name="Takami S."/>
            <person name="Terashima Y."/>
            <person name="Suzuki O."/>
            <person name="Nakagawa S."/>
            <person name="Senoh A."/>
            <person name="Mizoguchi H."/>
            <person name="Goto Y."/>
            <person name="Shimizu F."/>
            <person name="Wakebe H."/>
            <person name="Hishigaki H."/>
            <person name="Watanabe T."/>
            <person name="Sugiyama A."/>
            <person name="Takemoto M."/>
            <person name="Kawakami B."/>
            <person name="Yamazaki M."/>
            <person name="Watanabe K."/>
            <person name="Kumagai A."/>
            <person name="Itakura S."/>
            <person name="Fukuzumi Y."/>
            <person name="Fujimori Y."/>
            <person name="Komiyama M."/>
            <person name="Tashiro H."/>
            <person name="Tanigami A."/>
            <person name="Fujiwara T."/>
            <person name="Ono T."/>
            <person name="Yamada K."/>
            <person name="Fujii Y."/>
            <person name="Ozaki K."/>
            <person name="Hirao M."/>
            <person name="Ohmori Y."/>
            <person name="Kawabata A."/>
            <person name="Hikiji T."/>
            <person name="Kobatake N."/>
            <person name="Inagaki H."/>
            <person name="Ikema Y."/>
            <person name="Okamoto S."/>
            <person name="Okitani R."/>
            <person name="Kawakami T."/>
            <person name="Noguchi S."/>
            <person name="Itoh T."/>
            <person name="Shigeta K."/>
            <person name="Senba T."/>
            <person name="Matsumura K."/>
            <person name="Nakajima Y."/>
            <person name="Mizuno T."/>
            <person name="Morinaga M."/>
            <person name="Sasaki M."/>
            <person name="Togashi T."/>
            <person name="Oyama M."/>
            <person name="Hata H."/>
            <person name="Watanabe M."/>
            <person name="Komatsu T."/>
            <person name="Mizushima-Sugano J."/>
            <person name="Satoh T."/>
            <person name="Shirai Y."/>
            <person name="Takahashi Y."/>
            <person name="Nakagawa K."/>
            <person name="Okumura K."/>
            <person name="Nagase T."/>
            <person name="Nomura N."/>
            <person name="Kikuchi H."/>
            <person name="Masuho Y."/>
            <person name="Yamashita R."/>
            <person name="Nakai K."/>
            <person name="Yada T."/>
            <person name="Nakamura Y."/>
            <person name="Ohara O."/>
            <person name="Isogai T."/>
            <person name="Sugano S."/>
        </authorList>
    </citation>
    <scope>NUCLEOTIDE SEQUENCE [LARGE SCALE MRNA] (ISOFORM 3)</scope>
    <source>
        <tissue>Small intestine</tissue>
    </source>
</reference>
<reference key="5">
    <citation type="submission" date="2004-06" db="EMBL/GenBank/DDBJ databases">
        <title>Cloning of human full open reading frames in Gateway(TM) system entry vector (pDONR201).</title>
        <authorList>
            <person name="Ebert L."/>
            <person name="Schick M."/>
            <person name="Neubert P."/>
            <person name="Schatten R."/>
            <person name="Henze S."/>
            <person name="Korn B."/>
        </authorList>
    </citation>
    <scope>NUCLEOTIDE SEQUENCE [LARGE SCALE MRNA] (ISOFORM 2)</scope>
</reference>
<reference key="6">
    <citation type="submission" date="2004-10" db="EMBL/GenBank/DDBJ databases">
        <title>Cloning of human full-length CDSs in BD Creator(TM) system donor vector.</title>
        <authorList>
            <person name="Kalnine N."/>
            <person name="Chen X."/>
            <person name="Rolfs A."/>
            <person name="Halleck A."/>
            <person name="Hines L."/>
            <person name="Eisenstein S."/>
            <person name="Koundinya M."/>
            <person name="Raphael J."/>
            <person name="Moreira D."/>
            <person name="Kelley T."/>
            <person name="LaBaer J."/>
            <person name="Lin Y."/>
            <person name="Phelan M."/>
            <person name="Farmer A."/>
        </authorList>
    </citation>
    <scope>NUCLEOTIDE SEQUENCE [LARGE SCALE MRNA] (ISOFORM 1)</scope>
</reference>
<reference key="7">
    <citation type="journal article" date="2006" name="Nature">
        <title>The DNA sequence and biological annotation of human chromosome 1.</title>
        <authorList>
            <person name="Gregory S.G."/>
            <person name="Barlow K.F."/>
            <person name="McLay K.E."/>
            <person name="Kaul R."/>
            <person name="Swarbreck D."/>
            <person name="Dunham A."/>
            <person name="Scott C.E."/>
            <person name="Howe K.L."/>
            <person name="Woodfine K."/>
            <person name="Spencer C.C.A."/>
            <person name="Jones M.C."/>
            <person name="Gillson C."/>
            <person name="Searle S."/>
            <person name="Zhou Y."/>
            <person name="Kokocinski F."/>
            <person name="McDonald L."/>
            <person name="Evans R."/>
            <person name="Phillips K."/>
            <person name="Atkinson A."/>
            <person name="Cooper R."/>
            <person name="Jones C."/>
            <person name="Hall R.E."/>
            <person name="Andrews T.D."/>
            <person name="Lloyd C."/>
            <person name="Ainscough R."/>
            <person name="Almeida J.P."/>
            <person name="Ambrose K.D."/>
            <person name="Anderson F."/>
            <person name="Andrew R.W."/>
            <person name="Ashwell R.I.S."/>
            <person name="Aubin K."/>
            <person name="Babbage A.K."/>
            <person name="Bagguley C.L."/>
            <person name="Bailey J."/>
            <person name="Beasley H."/>
            <person name="Bethel G."/>
            <person name="Bird C.P."/>
            <person name="Bray-Allen S."/>
            <person name="Brown J.Y."/>
            <person name="Brown A.J."/>
            <person name="Buckley D."/>
            <person name="Burton J."/>
            <person name="Bye J."/>
            <person name="Carder C."/>
            <person name="Chapman J.C."/>
            <person name="Clark S.Y."/>
            <person name="Clarke G."/>
            <person name="Clee C."/>
            <person name="Cobley V."/>
            <person name="Collier R.E."/>
            <person name="Corby N."/>
            <person name="Coville G.J."/>
            <person name="Davies J."/>
            <person name="Deadman R."/>
            <person name="Dunn M."/>
            <person name="Earthrowl M."/>
            <person name="Ellington A.G."/>
            <person name="Errington H."/>
            <person name="Frankish A."/>
            <person name="Frankland J."/>
            <person name="French L."/>
            <person name="Garner P."/>
            <person name="Garnett J."/>
            <person name="Gay L."/>
            <person name="Ghori M.R.J."/>
            <person name="Gibson R."/>
            <person name="Gilby L.M."/>
            <person name="Gillett W."/>
            <person name="Glithero R.J."/>
            <person name="Grafham D.V."/>
            <person name="Griffiths C."/>
            <person name="Griffiths-Jones S."/>
            <person name="Grocock R."/>
            <person name="Hammond S."/>
            <person name="Harrison E.S.I."/>
            <person name="Hart E."/>
            <person name="Haugen E."/>
            <person name="Heath P.D."/>
            <person name="Holmes S."/>
            <person name="Holt K."/>
            <person name="Howden P.J."/>
            <person name="Hunt A.R."/>
            <person name="Hunt S.E."/>
            <person name="Hunter G."/>
            <person name="Isherwood J."/>
            <person name="James R."/>
            <person name="Johnson C."/>
            <person name="Johnson D."/>
            <person name="Joy A."/>
            <person name="Kay M."/>
            <person name="Kershaw J.K."/>
            <person name="Kibukawa M."/>
            <person name="Kimberley A.M."/>
            <person name="King A."/>
            <person name="Knights A.J."/>
            <person name="Lad H."/>
            <person name="Laird G."/>
            <person name="Lawlor S."/>
            <person name="Leongamornlert D.A."/>
            <person name="Lloyd D.M."/>
            <person name="Loveland J."/>
            <person name="Lovell J."/>
            <person name="Lush M.J."/>
            <person name="Lyne R."/>
            <person name="Martin S."/>
            <person name="Mashreghi-Mohammadi M."/>
            <person name="Matthews L."/>
            <person name="Matthews N.S.W."/>
            <person name="McLaren S."/>
            <person name="Milne S."/>
            <person name="Mistry S."/>
            <person name="Moore M.J.F."/>
            <person name="Nickerson T."/>
            <person name="O'Dell C.N."/>
            <person name="Oliver K."/>
            <person name="Palmeiri A."/>
            <person name="Palmer S.A."/>
            <person name="Parker A."/>
            <person name="Patel D."/>
            <person name="Pearce A.V."/>
            <person name="Peck A.I."/>
            <person name="Pelan S."/>
            <person name="Phelps K."/>
            <person name="Phillimore B.J."/>
            <person name="Plumb R."/>
            <person name="Rajan J."/>
            <person name="Raymond C."/>
            <person name="Rouse G."/>
            <person name="Saenphimmachak C."/>
            <person name="Sehra H.K."/>
            <person name="Sheridan E."/>
            <person name="Shownkeen R."/>
            <person name="Sims S."/>
            <person name="Skuce C.D."/>
            <person name="Smith M."/>
            <person name="Steward C."/>
            <person name="Subramanian S."/>
            <person name="Sycamore N."/>
            <person name="Tracey A."/>
            <person name="Tromans A."/>
            <person name="Van Helmond Z."/>
            <person name="Wall M."/>
            <person name="Wallis J.M."/>
            <person name="White S."/>
            <person name="Whitehead S.L."/>
            <person name="Wilkinson J.E."/>
            <person name="Willey D.L."/>
            <person name="Williams H."/>
            <person name="Wilming L."/>
            <person name="Wray P.W."/>
            <person name="Wu Z."/>
            <person name="Coulson A."/>
            <person name="Vaudin M."/>
            <person name="Sulston J.E."/>
            <person name="Durbin R.M."/>
            <person name="Hubbard T."/>
            <person name="Wooster R."/>
            <person name="Dunham I."/>
            <person name="Carter N.P."/>
            <person name="McVean G."/>
            <person name="Ross M.T."/>
            <person name="Harrow J."/>
            <person name="Olson M.V."/>
            <person name="Beck S."/>
            <person name="Rogers J."/>
            <person name="Bentley D.R."/>
        </authorList>
    </citation>
    <scope>NUCLEOTIDE SEQUENCE [LARGE SCALE GENOMIC DNA]</scope>
</reference>
<reference key="8">
    <citation type="submission" date="2005-07" db="EMBL/GenBank/DDBJ databases">
        <authorList>
            <person name="Mural R.J."/>
            <person name="Istrail S."/>
            <person name="Sutton G.G."/>
            <person name="Florea L."/>
            <person name="Halpern A.L."/>
            <person name="Mobarry C.M."/>
            <person name="Lippert R."/>
            <person name="Walenz B."/>
            <person name="Shatkay H."/>
            <person name="Dew I."/>
            <person name="Miller J.R."/>
            <person name="Flanigan M.J."/>
            <person name="Edwards N.J."/>
            <person name="Bolanos R."/>
            <person name="Fasulo D."/>
            <person name="Halldorsson B.V."/>
            <person name="Hannenhalli S."/>
            <person name="Turner R."/>
            <person name="Yooseph S."/>
            <person name="Lu F."/>
            <person name="Nusskern D.R."/>
            <person name="Shue B.C."/>
            <person name="Zheng X.H."/>
            <person name="Zhong F."/>
            <person name="Delcher A.L."/>
            <person name="Huson D.H."/>
            <person name="Kravitz S.A."/>
            <person name="Mouchard L."/>
            <person name="Reinert K."/>
            <person name="Remington K.A."/>
            <person name="Clark A.G."/>
            <person name="Waterman M.S."/>
            <person name="Eichler E.E."/>
            <person name="Adams M.D."/>
            <person name="Hunkapiller M.W."/>
            <person name="Myers E.W."/>
            <person name="Venter J.C."/>
        </authorList>
    </citation>
    <scope>NUCLEOTIDE SEQUENCE [LARGE SCALE GENOMIC DNA]</scope>
</reference>
<reference key="9">
    <citation type="journal article" date="2004" name="Genome Biol.">
        <title>An unappreciated role for RNA surveillance.</title>
        <authorList>
            <person name="Hillman R.T."/>
            <person name="Green R.E."/>
            <person name="Brenner S.E."/>
        </authorList>
    </citation>
    <scope>SPLICE ISOFORM(S) THAT ARE POTENTIAL NMD TARGET(S)</scope>
</reference>
<reference key="10">
    <citation type="journal article" date="2007" name="Proteomics">
        <title>Computational approach for identification and characterization of GPI-anchored peptides in proteomics experiments.</title>
        <authorList>
            <person name="Omaetxebarria M.J."/>
            <person name="Elortza F."/>
            <person name="Rodriguez-Suarez E."/>
            <person name="Aloria K."/>
            <person name="Arizmendi J.M."/>
            <person name="Jensen O.N."/>
            <person name="Matthiesen R."/>
        </authorList>
    </citation>
    <scope>IDENTIFICATION BY MASS SPECTROMETRY</scope>
</reference>
<reference key="11">
    <citation type="journal article" date="2017" name="Nature">
        <title>CMTM6 maintains the expression of PD-L1 and regulates anti-tumour immunity.</title>
        <authorList>
            <person name="Burr M.L."/>
            <person name="Sparbier C.E."/>
            <person name="Chan Y.C."/>
            <person name="Williamson J.C."/>
            <person name="Woods K."/>
            <person name="Beavis P.A."/>
            <person name="Lam E.Y.N."/>
            <person name="Henderson M.A."/>
            <person name="Bell C.C."/>
            <person name="Stolzenburg S."/>
            <person name="Gilan O."/>
            <person name="Bloor S."/>
            <person name="Noori T."/>
            <person name="Morgens D.W."/>
            <person name="Bassik M.C."/>
            <person name="Neeson P.J."/>
            <person name="Behren A."/>
            <person name="Darcy P.K."/>
            <person name="Dawson S.J."/>
            <person name="Voskoboinik I."/>
            <person name="Trapani J.A."/>
            <person name="Cebon J."/>
            <person name="Lehner P.J."/>
            <person name="Dawson M.A."/>
        </authorList>
    </citation>
    <scope>INTERACTION WITH CMTM6</scope>
    <scope>IDENTIFICATION BY MASS SPECTROMETRY</scope>
</reference>
<reference key="12">
    <citation type="journal article" date="2018" name="Proc. Natl. Acad. Sci. U.S.A.">
        <title>Suppression of costimulation by human cytomegalovirus promotes evasion of cellular immune defenses.</title>
        <authorList>
            <person name="Wang E.C.Y."/>
            <person name="Pjechova M."/>
            <person name="Nightingale K."/>
            <person name="Vlahava V.M."/>
            <person name="Patel M."/>
            <person name="Ruckova E."/>
            <person name="Forbes S.K."/>
            <person name="Nobre L."/>
            <person name="Antrobus R."/>
            <person name="Roberts D."/>
            <person name="Fielding C.A."/>
            <person name="Seirafian S."/>
            <person name="Davies J."/>
            <person name="Murrell I."/>
            <person name="Lau B."/>
            <person name="Wilkie G.S."/>
            <person name="Suarez N.M."/>
            <person name="Stanton R.J."/>
            <person name="Vojtesek B."/>
            <person name="Davison A."/>
            <person name="Lehner P.J."/>
            <person name="Weekes M.P."/>
            <person name="Wilkinson G.W.G."/>
            <person name="Tomasec P."/>
        </authorList>
    </citation>
    <scope>INTERACTION WITH HUMAN CYTOMEGALOVIRUS PROTEIN UL148 (MICROBIAL INFECTION)</scope>
</reference>
<reference key="13">
    <citation type="journal article" date="1999" name="Cell">
        <title>Structure of a heterophilic adhesion complex between the human CD2 and CD58 (LFA-3) counterreceptors.</title>
        <authorList>
            <person name="Wang J.H."/>
            <person name="Smolyar A."/>
            <person name="Tan K."/>
            <person name="Liu J.H."/>
            <person name="Kim M."/>
            <person name="Sun Z.Y."/>
            <person name="Wagner G."/>
            <person name="Reinherz E.L."/>
        </authorList>
    </citation>
    <scope>X-RAY CRYSTALLOGRAPHY (3.2 ANGSTROMS) OF 29-123 IN COMPLEX WITH CD2</scope>
    <scope>MUTAGENESIS OF PHE-29; VAL-37; VAL-49; VAL-86; THR-113 AND LEU-121</scope>
</reference>
<reference key="14">
    <citation type="journal article" date="1999" name="Proc. Natl. Acad. Sci. U.S.A.">
        <title>Crystal structure of the CD2-binding domain of CD58 (lymphocyte function-associated antigen 3) at 1.8-A resolution.</title>
        <authorList>
            <person name="Ikemizu S."/>
            <person name="Sparks L.M."/>
            <person name="van der Merwe P.A."/>
            <person name="Harlos K."/>
            <person name="Stuart D.I."/>
            <person name="Jones E.Y."/>
            <person name="Davis S.J."/>
        </authorList>
    </citation>
    <scope>X-RAY CRYSTALLOGRAPHY (1.8 ANGSTROMS) OF 29-122</scope>
</reference>
<gene>
    <name type="primary">CD58</name>
    <name type="synonym">LFA3</name>
</gene>
<keyword id="KW-0002">3D-structure</keyword>
<keyword id="KW-0025">Alternative splicing</keyword>
<keyword id="KW-1003">Cell membrane</keyword>
<keyword id="KW-0903">Direct protein sequencing</keyword>
<keyword id="KW-1015">Disulfide bond</keyword>
<keyword id="KW-0325">Glycoprotein</keyword>
<keyword id="KW-0393">Immunoglobulin domain</keyword>
<keyword id="KW-0472">Membrane</keyword>
<keyword id="KW-1267">Proteomics identification</keyword>
<keyword id="KW-1185">Reference proteome</keyword>
<keyword id="KW-0732">Signal</keyword>
<keyword id="KW-0812">Transmembrane</keyword>
<keyword id="KW-1133">Transmembrane helix</keyword>
<sequence>MVAGSDAGRALGVLSVVCLLHCFGFISCFSQQIYGVVYGNVTFHVPSNVPLKEVLWKKQKDKVAELENSEFRAFSSFKNRVYLDTVSGSLTIYNLTSSDEDEYEMESPNITDTMKFFLYVLESLPSPTLTCALTNGSIEVQCMIPEHYNSHRGLIMYSWDCPMEQCKRNSTSIYFKMENDLPQKIQCTLSNPLFNTTSSIILTTCIPSSGHSRHRYALIPIPLAVITTCIVLYMNGILKCDRKPDRTNSN</sequence>
<evidence type="ECO:0000250" key="1"/>
<evidence type="ECO:0000255" key="2"/>
<evidence type="ECO:0000269" key="3">
    <source>
    </source>
</evidence>
<evidence type="ECO:0000269" key="4">
    <source>
    </source>
</evidence>
<evidence type="ECO:0000269" key="5">
    <source>
    </source>
</evidence>
<evidence type="ECO:0000269" key="6">
    <source>
    </source>
</evidence>
<evidence type="ECO:0000269" key="7">
    <source>
    </source>
</evidence>
<evidence type="ECO:0000303" key="8">
    <source>
    </source>
</evidence>
<evidence type="ECO:0000303" key="9">
    <source>
    </source>
</evidence>
<evidence type="ECO:0000303" key="10">
    <source ref="5"/>
</evidence>
<evidence type="ECO:0007829" key="11">
    <source>
        <dbReference type="PDB" id="1CCZ"/>
    </source>
</evidence>
<proteinExistence type="evidence at protein level"/>
<accession>P19256</accession>
<accession>A8K7G5</accession>
<accession>Q5U053</accession>
<accession>Q6IB65</accession>
<accession>Q96KI9</accession>
<name>LFA3_HUMAN</name>
<dbReference type="EMBL" id="Y00636">
    <property type="protein sequence ID" value="CAA68668.1"/>
    <property type="molecule type" value="mRNA"/>
</dbReference>
<dbReference type="EMBL" id="X06296">
    <property type="protein sequence ID" value="CAA29622.1"/>
    <property type="molecule type" value="mRNA"/>
</dbReference>
<dbReference type="EMBL" id="Y14780">
    <property type="protein sequence ID" value="CAA75083.1"/>
    <property type="molecule type" value="Genomic_DNA"/>
</dbReference>
<dbReference type="EMBL" id="Y14781">
    <property type="protein sequence ID" value="CAA75083.1"/>
    <property type="status" value="JOINED"/>
    <property type="molecule type" value="Genomic_DNA"/>
</dbReference>
<dbReference type="EMBL" id="Y14782">
    <property type="protein sequence ID" value="CAA75083.1"/>
    <property type="status" value="JOINED"/>
    <property type="molecule type" value="Genomic_DNA"/>
</dbReference>
<dbReference type="EMBL" id="Y14783">
    <property type="protein sequence ID" value="CAA75083.1"/>
    <property type="status" value="JOINED"/>
    <property type="molecule type" value="Genomic_DNA"/>
</dbReference>
<dbReference type="EMBL" id="Y14784">
    <property type="protein sequence ID" value="CAA75083.1"/>
    <property type="status" value="JOINED"/>
    <property type="molecule type" value="Genomic_DNA"/>
</dbReference>
<dbReference type="EMBL" id="Y14780">
    <property type="protein sequence ID" value="CAA75084.1"/>
    <property type="molecule type" value="Genomic_DNA"/>
</dbReference>
<dbReference type="EMBL" id="Y14781">
    <property type="protein sequence ID" value="CAA75084.1"/>
    <property type="status" value="JOINED"/>
    <property type="molecule type" value="Genomic_DNA"/>
</dbReference>
<dbReference type="EMBL" id="Y14782">
    <property type="protein sequence ID" value="CAA75084.1"/>
    <property type="status" value="JOINED"/>
    <property type="molecule type" value="Genomic_DNA"/>
</dbReference>
<dbReference type="EMBL" id="Y14783">
    <property type="protein sequence ID" value="CAA75084.1"/>
    <property type="status" value="JOINED"/>
    <property type="molecule type" value="Genomic_DNA"/>
</dbReference>
<dbReference type="EMBL" id="Y14784">
    <property type="protein sequence ID" value="CAA75084.1"/>
    <property type="status" value="JOINED"/>
    <property type="molecule type" value="Genomic_DNA"/>
</dbReference>
<dbReference type="EMBL" id="Y14785">
    <property type="protein sequence ID" value="CAA75084.1"/>
    <property type="status" value="JOINED"/>
    <property type="molecule type" value="Genomic_DNA"/>
</dbReference>
<dbReference type="EMBL" id="AK291980">
    <property type="protein sequence ID" value="BAF84669.1"/>
    <property type="molecule type" value="mRNA"/>
</dbReference>
<dbReference type="EMBL" id="CR456939">
    <property type="protein sequence ID" value="CAG33220.1"/>
    <property type="molecule type" value="mRNA"/>
</dbReference>
<dbReference type="EMBL" id="BT019816">
    <property type="protein sequence ID" value="AAV38619.1"/>
    <property type="molecule type" value="mRNA"/>
</dbReference>
<dbReference type="EMBL" id="BT019817">
    <property type="protein sequence ID" value="AAV38620.1"/>
    <property type="molecule type" value="mRNA"/>
</dbReference>
<dbReference type="EMBL" id="AL390066">
    <property type="status" value="NOT_ANNOTATED_CDS"/>
    <property type="molecule type" value="Genomic_DNA"/>
</dbReference>
<dbReference type="EMBL" id="AL355794">
    <property type="status" value="NOT_ANNOTATED_CDS"/>
    <property type="molecule type" value="Genomic_DNA"/>
</dbReference>
<dbReference type="EMBL" id="CH471122">
    <property type="protein sequence ID" value="EAW56652.1"/>
    <property type="molecule type" value="Genomic_DNA"/>
</dbReference>
<dbReference type="EMBL" id="CH471122">
    <property type="protein sequence ID" value="EAW56653.1"/>
    <property type="molecule type" value="Genomic_DNA"/>
</dbReference>
<dbReference type="CCDS" id="CCDS44199.1">
    <molecule id="P19256-3"/>
</dbReference>
<dbReference type="CCDS" id="CCDS888.1">
    <molecule id="P19256-1"/>
</dbReference>
<dbReference type="PIR" id="A28564">
    <property type="entry name" value="A28564"/>
</dbReference>
<dbReference type="RefSeq" id="NP_001138294.1">
    <molecule id="P19256-3"/>
    <property type="nucleotide sequence ID" value="NM_001144822.2"/>
</dbReference>
<dbReference type="RefSeq" id="NP_001770.1">
    <molecule id="P19256-1"/>
    <property type="nucleotide sequence ID" value="NM_001779.3"/>
</dbReference>
<dbReference type="PDB" id="1CCZ">
    <property type="method" value="X-ray"/>
    <property type="resolution" value="1.80 A"/>
    <property type="chains" value="A=29-122"/>
</dbReference>
<dbReference type="PDB" id="1CI5">
    <property type="method" value="NMR"/>
    <property type="chains" value="A=29-123"/>
</dbReference>
<dbReference type="PDB" id="1QA9">
    <property type="method" value="X-ray"/>
    <property type="resolution" value="3.20 A"/>
    <property type="chains" value="B/D=30-123"/>
</dbReference>
<dbReference type="PDBsum" id="1CCZ"/>
<dbReference type="PDBsum" id="1CI5"/>
<dbReference type="PDBsum" id="1QA9"/>
<dbReference type="SMR" id="P19256"/>
<dbReference type="BioGRID" id="107403">
    <property type="interactions" value="26"/>
</dbReference>
<dbReference type="FunCoup" id="P19256">
    <property type="interactions" value="336"/>
</dbReference>
<dbReference type="IntAct" id="P19256">
    <property type="interactions" value="15"/>
</dbReference>
<dbReference type="MINT" id="P19256"/>
<dbReference type="STRING" id="9606.ENSP00000358501"/>
<dbReference type="ChEMBL" id="CHEMBL3790"/>
<dbReference type="GlyConnect" id="1474">
    <property type="glycosylation" value="1 N-Linked glycan (1 site)"/>
</dbReference>
<dbReference type="GlyCosmos" id="P19256">
    <property type="glycosylation" value="6 sites, 1 glycan"/>
</dbReference>
<dbReference type="GlyGen" id="P19256">
    <property type="glycosylation" value="8 sites, 7 N-linked glycans (3 sites), 1 O-linked glycan (1 site)"/>
</dbReference>
<dbReference type="iPTMnet" id="P19256"/>
<dbReference type="PhosphoSitePlus" id="P19256"/>
<dbReference type="SwissPalm" id="P19256"/>
<dbReference type="BioMuta" id="CD58"/>
<dbReference type="DMDM" id="126225"/>
<dbReference type="jPOST" id="P19256"/>
<dbReference type="MassIVE" id="P19256"/>
<dbReference type="PaxDb" id="9606-ENSP00000358501"/>
<dbReference type="PeptideAtlas" id="P19256"/>
<dbReference type="ProteomicsDB" id="53642">
    <molecule id="P19256-1"/>
</dbReference>
<dbReference type="ProteomicsDB" id="53643">
    <molecule id="P19256-2"/>
</dbReference>
<dbReference type="ProteomicsDB" id="53644">
    <molecule id="P19256-3"/>
</dbReference>
<dbReference type="Pumba" id="P19256"/>
<dbReference type="TopDownProteomics" id="P19256-1">
    <molecule id="P19256-1"/>
</dbReference>
<dbReference type="TopDownProteomics" id="P19256-2">
    <molecule id="P19256-2"/>
</dbReference>
<dbReference type="Antibodypedia" id="20181">
    <property type="antibodies" value="940 antibodies from 42 providers"/>
</dbReference>
<dbReference type="DNASU" id="965"/>
<dbReference type="Ensembl" id="ENST00000369489.10">
    <molecule id="P19256-1"/>
    <property type="protein sequence ID" value="ENSP00000358501.5"/>
    <property type="gene ID" value="ENSG00000116815.16"/>
</dbReference>
<dbReference type="Ensembl" id="ENST00000457047.6">
    <molecule id="P19256-3"/>
    <property type="protein sequence ID" value="ENSP00000409080.2"/>
    <property type="gene ID" value="ENSG00000116815.16"/>
</dbReference>
<dbReference type="Ensembl" id="ENST00000464088.5">
    <molecule id="P19256-2"/>
    <property type="protein sequence ID" value="ENSP00000432773.1"/>
    <property type="gene ID" value="ENSG00000116815.16"/>
</dbReference>
<dbReference type="GeneID" id="965"/>
<dbReference type="KEGG" id="hsa:965"/>
<dbReference type="MANE-Select" id="ENST00000369489.10">
    <property type="protein sequence ID" value="ENSP00000358501.5"/>
    <property type="RefSeq nucleotide sequence ID" value="NM_001779.3"/>
    <property type="RefSeq protein sequence ID" value="NP_001770.1"/>
</dbReference>
<dbReference type="UCSC" id="uc001egm.4">
    <molecule id="P19256-1"/>
    <property type="organism name" value="human"/>
</dbReference>
<dbReference type="AGR" id="HGNC:1688"/>
<dbReference type="CTD" id="965"/>
<dbReference type="DisGeNET" id="965"/>
<dbReference type="GeneCards" id="CD58"/>
<dbReference type="HGNC" id="HGNC:1688">
    <property type="gene designation" value="CD58"/>
</dbReference>
<dbReference type="HPA" id="ENSG00000116815">
    <property type="expression patterns" value="Low tissue specificity"/>
</dbReference>
<dbReference type="MalaCards" id="CD58"/>
<dbReference type="MIM" id="153420">
    <property type="type" value="gene"/>
</dbReference>
<dbReference type="neXtProt" id="NX_P19256"/>
<dbReference type="OpenTargets" id="ENSG00000116815"/>
<dbReference type="PharmGKB" id="PA26227"/>
<dbReference type="VEuPathDB" id="HostDB:ENSG00000116815"/>
<dbReference type="eggNOG" id="ENOG502SB68">
    <property type="taxonomic scope" value="Eukaryota"/>
</dbReference>
<dbReference type="GeneTree" id="ENSGT00510000049596"/>
<dbReference type="HOGENOM" id="CLU_1291581_0_0_1"/>
<dbReference type="InParanoid" id="P19256"/>
<dbReference type="OMA" id="DKVIEWE"/>
<dbReference type="OrthoDB" id="9427418at2759"/>
<dbReference type="PAN-GO" id="P19256">
    <property type="GO annotations" value="2 GO annotations based on evolutionary models"/>
</dbReference>
<dbReference type="PhylomeDB" id="P19256"/>
<dbReference type="TreeFam" id="TF341787"/>
<dbReference type="PathwayCommons" id="P19256"/>
<dbReference type="Reactome" id="R-HSA-202733">
    <property type="pathway name" value="Cell surface interactions at the vascular wall"/>
</dbReference>
<dbReference type="Reactome" id="R-HSA-6798695">
    <property type="pathway name" value="Neutrophil degranulation"/>
</dbReference>
<dbReference type="SignaLink" id="P19256"/>
<dbReference type="BioGRID-ORCS" id="965">
    <property type="hits" value="26 hits in 1161 CRISPR screens"/>
</dbReference>
<dbReference type="ChiTaRS" id="CD58">
    <property type="organism name" value="human"/>
</dbReference>
<dbReference type="EvolutionaryTrace" id="P19256"/>
<dbReference type="GenomeRNAi" id="965"/>
<dbReference type="Pharos" id="P19256">
    <property type="development level" value="Tbio"/>
</dbReference>
<dbReference type="PRO" id="PR:P19256"/>
<dbReference type="Proteomes" id="UP000005640">
    <property type="component" value="Chromosome 1"/>
</dbReference>
<dbReference type="RNAct" id="P19256">
    <property type="molecule type" value="protein"/>
</dbReference>
<dbReference type="Bgee" id="ENSG00000116815">
    <property type="expression patterns" value="Expressed in jejunal mucosa and 196 other cell types or tissues"/>
</dbReference>
<dbReference type="ExpressionAtlas" id="P19256">
    <property type="expression patterns" value="baseline and differential"/>
</dbReference>
<dbReference type="GO" id="GO:0009986">
    <property type="term" value="C:cell surface"/>
    <property type="evidence" value="ECO:0000314"/>
    <property type="project" value="UniProtKB"/>
</dbReference>
<dbReference type="GO" id="GO:0070062">
    <property type="term" value="C:extracellular exosome"/>
    <property type="evidence" value="ECO:0007005"/>
    <property type="project" value="UniProtKB"/>
</dbReference>
<dbReference type="GO" id="GO:0101003">
    <property type="term" value="C:ficolin-1-rich granule membrane"/>
    <property type="evidence" value="ECO:0000304"/>
    <property type="project" value="Reactome"/>
</dbReference>
<dbReference type="GO" id="GO:0016020">
    <property type="term" value="C:membrane"/>
    <property type="evidence" value="ECO:0007005"/>
    <property type="project" value="UniProtKB"/>
</dbReference>
<dbReference type="GO" id="GO:0005886">
    <property type="term" value="C:plasma membrane"/>
    <property type="evidence" value="ECO:0000304"/>
    <property type="project" value="Reactome"/>
</dbReference>
<dbReference type="GO" id="GO:0030667">
    <property type="term" value="C:secretory granule membrane"/>
    <property type="evidence" value="ECO:0000304"/>
    <property type="project" value="Reactome"/>
</dbReference>
<dbReference type="GO" id="GO:0005102">
    <property type="term" value="F:signaling receptor binding"/>
    <property type="evidence" value="ECO:0000353"/>
    <property type="project" value="UniProtKB"/>
</dbReference>
<dbReference type="GO" id="GO:0098609">
    <property type="term" value="P:cell-cell adhesion"/>
    <property type="evidence" value="ECO:0000303"/>
    <property type="project" value="UniProtKB"/>
</dbReference>
<dbReference type="GO" id="GO:0071356">
    <property type="term" value="P:cellular response to tumor necrosis factor"/>
    <property type="evidence" value="ECO:0000314"/>
    <property type="project" value="UniProtKB"/>
</dbReference>
<dbReference type="GO" id="GO:0071346">
    <property type="term" value="P:cellular response to type II interferon"/>
    <property type="evidence" value="ECO:0000314"/>
    <property type="project" value="UniProtKB"/>
</dbReference>
<dbReference type="GO" id="GO:0034113">
    <property type="term" value="P:heterotypic cell-cell adhesion"/>
    <property type="evidence" value="ECO:0000314"/>
    <property type="project" value="UniProtKB"/>
</dbReference>
<dbReference type="GO" id="GO:0006955">
    <property type="term" value="P:immune response"/>
    <property type="evidence" value="ECO:0000318"/>
    <property type="project" value="GO_Central"/>
</dbReference>
<dbReference type="GO" id="GO:0032757">
    <property type="term" value="P:positive regulation of interleukin-8 production"/>
    <property type="evidence" value="ECO:0000315"/>
    <property type="project" value="UniProtKB"/>
</dbReference>
<dbReference type="CDD" id="cd05775">
    <property type="entry name" value="IgV_CD2_like_N"/>
    <property type="match status" value="1"/>
</dbReference>
<dbReference type="FunFam" id="2.60.40.10:FF:001702">
    <property type="entry name" value="Lymphocyte function-associated antigen 3"/>
    <property type="match status" value="1"/>
</dbReference>
<dbReference type="Gene3D" id="2.60.40.10">
    <property type="entry name" value="Immunoglobulins"/>
    <property type="match status" value="1"/>
</dbReference>
<dbReference type="InterPro" id="IPR015631">
    <property type="entry name" value="CD2/SLAM_rcpt"/>
</dbReference>
<dbReference type="InterPro" id="IPR036179">
    <property type="entry name" value="Ig-like_dom_sf"/>
</dbReference>
<dbReference type="InterPro" id="IPR013783">
    <property type="entry name" value="Ig-like_fold"/>
</dbReference>
<dbReference type="PANTHER" id="PTHR12080:SF55">
    <property type="entry name" value="LYMPHOCYTE FUNCTION-ASSOCIATED ANTIGEN 3"/>
    <property type="match status" value="1"/>
</dbReference>
<dbReference type="PANTHER" id="PTHR12080">
    <property type="entry name" value="SIGNALING LYMPHOCYTIC ACTIVATION MOLECULE"/>
    <property type="match status" value="1"/>
</dbReference>
<dbReference type="SUPFAM" id="SSF48726">
    <property type="entry name" value="Immunoglobulin"/>
    <property type="match status" value="1"/>
</dbReference>
<comment type="function">
    <text>Ligand of the T-lymphocyte CD2 glycoprotein. This interaction is important in mediating thymocyte interactions with thymic epithelial cells, antigen-independent and -dependent interactions of T-lymphocytes with target cells and antigen-presenting cells and the T-lymphocyte rosetting with erythrocytes. In addition, the LFA-3/CD2 interaction may prime response by both the CD2+ and LFA-3+ cells.</text>
</comment>
<comment type="subunit">
    <text evidence="3 5 7">Interacts with CD2 (PubMed:10380930, PubMed:3309127). Interacts with CMTM6 (PubMed:28813417).</text>
</comment>
<comment type="subunit">
    <text evidence="6">(Microbial infection) Interacts with human cytomegalovirus protein UL148; this interaction retains immature CD58 intracellularly.</text>
</comment>
<comment type="subcellular location">
    <molecule>Isoform 1</molecule>
    <subcellularLocation>
        <location>Cell membrane</location>
        <topology>Single-pass type I membrane protein</topology>
    </subcellularLocation>
</comment>
<comment type="alternative products">
    <event type="alternative splicing"/>
    <isoform>
        <id>P19256-1</id>
        <name>1</name>
        <name>Long</name>
        <sequence type="displayed"/>
    </isoform>
    <isoform>
        <id>P19256-2</id>
        <name>2</name>
        <name>Short</name>
        <sequence type="described" ref="VSP_002522 VSP_002523"/>
    </isoform>
    <isoform>
        <id>P19256-3</id>
        <name>3</name>
        <sequence type="described" ref="VSP_038693"/>
    </isoform>
</comment>
<comment type="miscellaneous">
    <molecule>Isoform 2</molecule>
    <text evidence="4">May be produced at very low levels due to a premature stop codon in the mRNA, leading to nonsense-mediated mRNA decay.</text>
</comment>